<comment type="function">
    <text>May be involved in transcriptional regulation.</text>
</comment>
<comment type="interaction">
    <interactant intactId="EBI-717634">
        <id>P17024</id>
    </interactant>
    <interactant intactId="EBI-367510">
        <id>P68133</id>
        <label>ACTA1</label>
    </interactant>
    <organismsDiffer>false</organismsDiffer>
    <experiments>3</experiments>
</comment>
<comment type="interaction">
    <interactant intactId="EBI-717634">
        <id>P17024</id>
    </interactant>
    <interactant intactId="EBI-720250">
        <id>Q9NZD4</id>
        <label>AHSP</label>
    </interactant>
    <organismsDiffer>false</organismsDiffer>
    <experiments>3</experiments>
</comment>
<comment type="interaction">
    <interactant intactId="EBI-717634">
        <id>P17024</id>
    </interactant>
    <interactant intactId="EBI-8643161">
        <id>Q9NX04</id>
        <label>AIRIM</label>
    </interactant>
    <organismsDiffer>false</organismsDiffer>
    <experiments>3</experiments>
</comment>
<comment type="interaction">
    <interactant intactId="EBI-717634">
        <id>P17024</id>
    </interactant>
    <interactant intactId="EBI-948169">
        <id>P13637</id>
        <label>ATP1A3</label>
    </interactant>
    <organismsDiffer>false</organismsDiffer>
    <experiments>3</experiments>
</comment>
<comment type="interaction">
    <interactant intactId="EBI-717634">
        <id>P17024</id>
    </interactant>
    <interactant intactId="EBI-11530605">
        <id>Q9H257-2</id>
        <label>CARD9</label>
    </interactant>
    <organismsDiffer>false</organismsDiffer>
    <experiments>3</experiments>
</comment>
<comment type="interaction">
    <interactant intactId="EBI-717634">
        <id>P17024</id>
    </interactant>
    <interactant intactId="EBI-10171570">
        <id>Q68D86</id>
        <label>CCDC102B</label>
    </interactant>
    <organismsDiffer>false</organismsDiffer>
    <experiments>6</experiments>
</comment>
<comment type="interaction">
    <interactant intactId="EBI-717634">
        <id>P17024</id>
    </interactant>
    <interactant intactId="EBI-10171416">
        <id>Q96JN2-2</id>
        <label>CCDC136</label>
    </interactant>
    <organismsDiffer>false</organismsDiffer>
    <experiments>3</experiments>
</comment>
<comment type="interaction">
    <interactant intactId="EBI-717634">
        <id>P17024</id>
    </interactant>
    <interactant intactId="EBI-748961">
        <id>O95273</id>
        <label>CCNDBP1</label>
    </interactant>
    <organismsDiffer>false</organismsDiffer>
    <experiments>6</experiments>
</comment>
<comment type="interaction">
    <interactant intactId="EBI-717634">
        <id>P17024</id>
    </interactant>
    <interactant intactId="EBI-739624">
        <id>Q8NHQ1</id>
        <label>CEP70</label>
    </interactant>
    <organismsDiffer>false</organismsDiffer>
    <experiments>3</experiments>
</comment>
<comment type="interaction">
    <interactant intactId="EBI-717634">
        <id>P17024</id>
    </interactant>
    <interactant intactId="EBI-739773">
        <id>Q9BSW2</id>
        <label>CRACR2A</label>
    </interactant>
    <organismsDiffer>false</organismsDiffer>
    <experiments>3</experiments>
</comment>
<comment type="interaction">
    <interactant intactId="EBI-717634">
        <id>P17024</id>
    </interactant>
    <interactant intactId="EBI-10976677">
        <id>G5E9A7</id>
        <label>DMWD</label>
    </interactant>
    <organismsDiffer>false</organismsDiffer>
    <experiments>3</experiments>
</comment>
<comment type="interaction">
    <interactant intactId="EBI-717634">
        <id>P17024</id>
    </interactant>
    <interactant intactId="EBI-5661036">
        <id>A1L4K1</id>
        <label>FSD2</label>
    </interactant>
    <organismsDiffer>false</organismsDiffer>
    <experiments>3</experiments>
</comment>
<comment type="interaction">
    <interactant intactId="EBI-717634">
        <id>P17024</id>
    </interactant>
    <interactant intactId="EBI-744104">
        <id>P55040</id>
        <label>GEM</label>
    </interactant>
    <organismsDiffer>false</organismsDiffer>
    <experiments>3</experiments>
</comment>
<comment type="interaction">
    <interactant intactId="EBI-717634">
        <id>P17024</id>
    </interactant>
    <interactant intactId="EBI-744302">
        <id>P14136</id>
        <label>GFAP</label>
    </interactant>
    <organismsDiffer>false</organismsDiffer>
    <experiments>3</experiments>
</comment>
<comment type="interaction">
    <interactant intactId="EBI-717634">
        <id>P17024</id>
    </interactant>
    <interactant intactId="EBI-5916454">
        <id>A6NEM1</id>
        <label>GOLGA6L9</label>
    </interactant>
    <organismsDiffer>false</organismsDiffer>
    <experiments>3</experiments>
</comment>
<comment type="interaction">
    <interactant intactId="EBI-717634">
        <id>P17024</id>
    </interactant>
    <interactant intactId="EBI-347538">
        <id>Q9Y4H4</id>
        <label>GPSM3</label>
    </interactant>
    <organismsDiffer>false</organismsDiffer>
    <experiments>3</experiments>
</comment>
<comment type="interaction">
    <interactant intactId="EBI-717634">
        <id>P17024</id>
    </interactant>
    <interactant intactId="EBI-1055254">
        <id>Q8WXH2</id>
        <label>JPH3</label>
    </interactant>
    <organismsDiffer>false</organismsDiffer>
    <experiments>3</experiments>
</comment>
<comment type="interaction">
    <interactant intactId="EBI-717634">
        <id>P17024</id>
    </interactant>
    <interactant intactId="EBI-2125614">
        <id>Q9BVG8</id>
        <label>KIFC3</label>
    </interactant>
    <organismsDiffer>false</organismsDiffer>
    <experiments>3</experiments>
</comment>
<comment type="interaction">
    <interactant intactId="EBI-717634">
        <id>P17024</id>
    </interactant>
    <interactant intactId="EBI-14069005">
        <id>Q9BVG8-5</id>
        <label>KIFC3</label>
    </interactant>
    <organismsDiffer>false</organismsDiffer>
    <experiments>3</experiments>
</comment>
<comment type="interaction">
    <interactant intactId="EBI-717634">
        <id>P17024</id>
    </interactant>
    <interactant intactId="EBI-948001">
        <id>Q15323</id>
        <label>KRT31</label>
    </interactant>
    <organismsDiffer>false</organismsDiffer>
    <experiments>3</experiments>
</comment>
<comment type="interaction">
    <interactant intactId="EBI-717634">
        <id>P17024</id>
    </interactant>
    <interactant intactId="EBI-1047263">
        <id>O76015</id>
        <label>KRT38</label>
    </interactant>
    <organismsDiffer>false</organismsDiffer>
    <experiments>3</experiments>
</comment>
<comment type="interaction">
    <interactant intactId="EBI-717634">
        <id>P17024</id>
    </interactant>
    <interactant intactId="EBI-10171697">
        <id>Q6A162</id>
        <label>KRT40</label>
    </interactant>
    <organismsDiffer>false</organismsDiffer>
    <experiments>3</experiments>
</comment>
<comment type="interaction">
    <interactant intactId="EBI-717634">
        <id>P17024</id>
    </interactant>
    <interactant intactId="EBI-10172150">
        <id>P60370</id>
        <label>KRTAP10-5</label>
    </interactant>
    <organismsDiffer>false</organismsDiffer>
    <experiments>3</experiments>
</comment>
<comment type="interaction">
    <interactant intactId="EBI-717634">
        <id>P17024</id>
    </interactant>
    <interactant intactId="EBI-10172290">
        <id>P60409</id>
        <label>KRTAP10-7</label>
    </interactant>
    <organismsDiffer>false</organismsDiffer>
    <experiments>3</experiments>
</comment>
<comment type="interaction">
    <interactant intactId="EBI-717634">
        <id>P17024</id>
    </interactant>
    <interactant intactId="EBI-10171774">
        <id>P60410</id>
        <label>KRTAP10-8</label>
    </interactant>
    <organismsDiffer>false</organismsDiffer>
    <experiments>6</experiments>
</comment>
<comment type="interaction">
    <interactant intactId="EBI-717634">
        <id>P17024</id>
    </interactant>
    <interactant intactId="EBI-10172052">
        <id>P60411</id>
        <label>KRTAP10-9</label>
    </interactant>
    <organismsDiffer>false</organismsDiffer>
    <experiments>3</experiments>
</comment>
<comment type="interaction">
    <interactant intactId="EBI-717634">
        <id>P17024</id>
    </interactant>
    <interactant intactId="EBI-11953334">
        <id>P60328</id>
        <label>KRTAP12-3</label>
    </interactant>
    <organismsDiffer>false</organismsDiffer>
    <experiments>3</experiments>
</comment>
<comment type="interaction">
    <interactant intactId="EBI-717634">
        <id>P17024</id>
    </interactant>
    <interactant intactId="EBI-739863">
        <id>Q9BQ66</id>
        <label>KRTAP4-12</label>
    </interactant>
    <organismsDiffer>false</organismsDiffer>
    <experiments>3</experiments>
</comment>
<comment type="interaction">
    <interactant intactId="EBI-717634">
        <id>P17024</id>
    </interactant>
    <interactant intactId="EBI-10172511">
        <id>Q9BYR5</id>
        <label>KRTAP4-2</label>
    </interactant>
    <organismsDiffer>false</organismsDiffer>
    <experiments>3</experiments>
</comment>
<comment type="interaction">
    <interactant intactId="EBI-717634">
        <id>P17024</id>
    </interactant>
    <interactant intactId="EBI-1044640">
        <id>Q9BYQ4</id>
        <label>KRTAP9-2</label>
    </interactant>
    <organismsDiffer>false</organismsDiffer>
    <experiments>3</experiments>
</comment>
<comment type="interaction">
    <interactant intactId="EBI-717634">
        <id>P17024</id>
    </interactant>
    <interactant intactId="EBI-351935">
        <id>P02545</id>
        <label>LMNA</label>
    </interactant>
    <organismsDiffer>false</organismsDiffer>
    <experiments>3</experiments>
</comment>
<comment type="interaction">
    <interactant intactId="EBI-717634">
        <id>P17024</id>
    </interactant>
    <interactant intactId="EBI-741037">
        <id>Q9BRK4</id>
        <label>LZTS2</label>
    </interactant>
    <organismsDiffer>false</organismsDiffer>
    <experiments>3</experiments>
</comment>
<comment type="interaction">
    <interactant intactId="EBI-717634">
        <id>P17024</id>
    </interactant>
    <interactant intactId="EBI-14083835">
        <id>O94964-4</id>
        <label>MTCL2</label>
    </interactant>
    <organismsDiffer>false</organismsDiffer>
    <experiments>3</experiments>
</comment>
<comment type="interaction">
    <interactant intactId="EBI-717634">
        <id>P17024</id>
    </interactant>
    <interactant intactId="EBI-742948">
        <id>Q5JR59</id>
        <label>MTUS2</label>
    </interactant>
    <organismsDiffer>false</organismsDiffer>
    <experiments>3</experiments>
</comment>
<comment type="interaction">
    <interactant intactId="EBI-717634">
        <id>P17024</id>
    </interactant>
    <interactant intactId="EBI-11522433">
        <id>Q5JR59-3</id>
        <label>MTUS2</label>
    </interactant>
    <organismsDiffer>false</organismsDiffer>
    <experiments>3</experiments>
</comment>
<comment type="interaction">
    <interactant intactId="EBI-717634">
        <id>P17024</id>
    </interactant>
    <interactant intactId="EBI-1014472">
        <id>P35240</id>
        <label>NF2</label>
    </interactant>
    <organismsDiffer>false</organismsDiffer>
    <experiments>3</experiments>
</comment>
<comment type="interaction">
    <interactant intactId="EBI-717634">
        <id>P17024</id>
    </interactant>
    <interactant intactId="EBI-716404">
        <id>P16284</id>
        <label>PECAM1</label>
    </interactant>
    <organismsDiffer>false</organismsDiffer>
    <experiments>3</experiments>
</comment>
<comment type="interaction">
    <interactant intactId="EBI-717634">
        <id>P17024</id>
    </interactant>
    <interactant intactId="EBI-399437">
        <id>P20339</id>
        <label>RAB5A</label>
    </interactant>
    <organismsDiffer>false</organismsDiffer>
    <experiments>3</experiments>
</comment>
<comment type="interaction">
    <interactant intactId="EBI-717634">
        <id>P17024</id>
    </interactant>
    <interactant intactId="EBI-748391">
        <id>Q9BWG6</id>
        <label>SCNM1</label>
    </interactant>
    <organismsDiffer>false</organismsDiffer>
    <experiments>3</experiments>
</comment>
<comment type="interaction">
    <interactant intactId="EBI-717634">
        <id>P17024</id>
    </interactant>
    <interactant intactId="EBI-5235340">
        <id>Q7Z699</id>
        <label>SPRED1</label>
    </interactant>
    <organismsDiffer>false</organismsDiffer>
    <experiments>3</experiments>
</comment>
<comment type="interaction">
    <interactant intactId="EBI-717634">
        <id>P17024</id>
    </interactant>
    <interactant intactId="EBI-750487">
        <id>Q8WW24</id>
        <label>TEKT4</label>
    </interactant>
    <organismsDiffer>false</organismsDiffer>
    <experiments>3</experiments>
</comment>
<comment type="interaction">
    <interactant intactId="EBI-717634">
        <id>P17024</id>
    </interactant>
    <interactant intactId="EBI-359224">
        <id>Q13077</id>
        <label>TRAF1</label>
    </interactant>
    <organismsDiffer>false</organismsDiffer>
    <experiments>6</experiments>
</comment>
<comment type="interaction">
    <interactant intactId="EBI-717634">
        <id>P17024</id>
    </interactant>
    <interactant intactId="EBI-740098">
        <id>P36406</id>
        <label>TRIM23</label>
    </interactant>
    <organismsDiffer>false</organismsDiffer>
    <experiments>3</experiments>
</comment>
<comment type="interaction">
    <interactant intactId="EBI-717634">
        <id>P17024</id>
    </interactant>
    <interactant intactId="EBI-6116822">
        <id>Q8N3L3</id>
        <label>TXLNB</label>
    </interactant>
    <organismsDiffer>false</organismsDiffer>
    <experiments>3</experiments>
</comment>
<comment type="interaction">
    <interactant intactId="EBI-717634">
        <id>P17024</id>
    </interactant>
    <interactant intactId="EBI-353844">
        <id>P08670</id>
        <label>VIM</label>
    </interactant>
    <organismsDiffer>false</organismsDiffer>
    <experiments>3</experiments>
</comment>
<comment type="interaction">
    <interactant intactId="EBI-717634">
        <id>P17024</id>
    </interactant>
    <interactant intactId="EBI-11747707">
        <id>B2RUY7</id>
        <label>VWC2L</label>
    </interactant>
    <organismsDiffer>false</organismsDiffer>
    <experiments>3</experiments>
</comment>
<comment type="interaction">
    <interactant intactId="EBI-717634">
        <id>P17024</id>
    </interactant>
    <interactant intactId="EBI-2850497">
        <id>Q96DN2</id>
        <label>VWCE</label>
    </interactant>
    <organismsDiffer>false</organismsDiffer>
    <experiments>3</experiments>
</comment>
<comment type="interaction">
    <interactant intactId="EBI-717634">
        <id>P17024</id>
    </interactant>
    <interactant intactId="EBI-1048893">
        <id>P54577</id>
        <label>YARS1</label>
    </interactant>
    <organismsDiffer>false</organismsDiffer>
    <experiments>3</experiments>
</comment>
<comment type="interaction">
    <interactant intactId="EBI-717634">
        <id>P17024</id>
    </interactant>
    <interactant intactId="EBI-740727">
        <id>Q8TAU3</id>
        <label>ZNF417</label>
    </interactant>
    <organismsDiffer>false</organismsDiffer>
    <experiments>3</experiments>
</comment>
<comment type="subcellular location">
    <subcellularLocation>
        <location evidence="3">Nucleus</location>
    </subcellularLocation>
</comment>
<comment type="similarity">
    <text evidence="3">Belongs to the krueppel C2H2-type zinc-finger protein family.</text>
</comment>
<reference key="1">
    <citation type="journal article" date="2007" name="BMC Genomics">
        <title>The full-ORF clone resource of the German cDNA consortium.</title>
        <authorList>
            <person name="Bechtel S."/>
            <person name="Rosenfelder H."/>
            <person name="Duda A."/>
            <person name="Schmidt C.P."/>
            <person name="Ernst U."/>
            <person name="Wellenreuther R."/>
            <person name="Mehrle A."/>
            <person name="Schuster C."/>
            <person name="Bahr A."/>
            <person name="Bloecker H."/>
            <person name="Heubner D."/>
            <person name="Hoerlein A."/>
            <person name="Michel G."/>
            <person name="Wedler H."/>
            <person name="Koehrer K."/>
            <person name="Ottenwaelder B."/>
            <person name="Poustka A."/>
            <person name="Wiemann S."/>
            <person name="Schupp I."/>
        </authorList>
    </citation>
    <scope>NUCLEOTIDE SEQUENCE [LARGE SCALE MRNA]</scope>
    <source>
        <tissue>Brain</tissue>
    </source>
</reference>
<reference key="2">
    <citation type="submission" date="2005-07" db="EMBL/GenBank/DDBJ databases">
        <authorList>
            <person name="Mural R.J."/>
            <person name="Istrail S."/>
            <person name="Sutton G.G."/>
            <person name="Florea L."/>
            <person name="Halpern A.L."/>
            <person name="Mobarry C.M."/>
            <person name="Lippert R."/>
            <person name="Walenz B."/>
            <person name="Shatkay H."/>
            <person name="Dew I."/>
            <person name="Miller J.R."/>
            <person name="Flanigan M.J."/>
            <person name="Edwards N.J."/>
            <person name="Bolanos R."/>
            <person name="Fasulo D."/>
            <person name="Halldorsson B.V."/>
            <person name="Hannenhalli S."/>
            <person name="Turner R."/>
            <person name="Yooseph S."/>
            <person name="Lu F."/>
            <person name="Nusskern D.R."/>
            <person name="Shue B.C."/>
            <person name="Zheng X.H."/>
            <person name="Zhong F."/>
            <person name="Delcher A.L."/>
            <person name="Huson D.H."/>
            <person name="Kravitz S.A."/>
            <person name="Mouchard L."/>
            <person name="Reinert K."/>
            <person name="Remington K.A."/>
            <person name="Clark A.G."/>
            <person name="Waterman M.S."/>
            <person name="Eichler E.E."/>
            <person name="Adams M.D."/>
            <person name="Hunkapiller M.W."/>
            <person name="Myers E.W."/>
            <person name="Venter J.C."/>
        </authorList>
    </citation>
    <scope>NUCLEOTIDE SEQUENCE [LARGE SCALE GENOMIC DNA]</scope>
</reference>
<reference key="3">
    <citation type="journal article" date="2004" name="Genome Res.">
        <title>The status, quality, and expansion of the NIH full-length cDNA project: the Mammalian Gene Collection (MGC).</title>
        <authorList>
            <consortium name="The MGC Project Team"/>
        </authorList>
    </citation>
    <scope>NUCLEOTIDE SEQUENCE [LARGE SCALE MRNA]</scope>
    <source>
        <tissue>B-cell</tissue>
    </source>
</reference>
<reference key="4">
    <citation type="journal article" date="1990" name="New Biol.">
        <title>Multiple genes encoding zinc finger domains are expressed in human T cells.</title>
        <authorList>
            <person name="Thiesen H.-J."/>
        </authorList>
    </citation>
    <scope>NUCLEOTIDE SEQUENCE [MRNA] OF 227-282</scope>
</reference>
<gene>
    <name type="primary">ZNF20</name>
    <name type="synonym">KOX13</name>
</gene>
<protein>
    <recommendedName>
        <fullName>Zinc finger protein 20</fullName>
    </recommendedName>
    <alternativeName>
        <fullName>Zinc finger protein KOX13</fullName>
    </alternativeName>
</protein>
<feature type="chain" id="PRO_0000047344" description="Zinc finger protein 20">
    <location>
        <begin position="1"/>
        <end position="532"/>
    </location>
</feature>
<feature type="domain" description="KRAB" evidence="2">
    <location>
        <begin position="7"/>
        <end position="78"/>
    </location>
</feature>
<feature type="zinc finger region" description="C2H2-type 1; atypical" evidence="1">
    <location>
        <begin position="103"/>
        <end position="130"/>
    </location>
</feature>
<feature type="zinc finger region" description="C2H2-type 2; degenerate" evidence="1">
    <location>
        <begin position="143"/>
        <end position="165"/>
    </location>
</feature>
<feature type="zinc finger region" description="C2H2-type 3; degenerate" evidence="1">
    <location>
        <begin position="171"/>
        <end position="193"/>
    </location>
</feature>
<feature type="zinc finger region" description="C2H2-type 4" evidence="1">
    <location>
        <begin position="199"/>
        <end position="221"/>
    </location>
</feature>
<feature type="zinc finger region" description="C2H2-type 5" evidence="1">
    <location>
        <begin position="227"/>
        <end position="249"/>
    </location>
</feature>
<feature type="zinc finger region" description="C2H2-type 6" evidence="1">
    <location>
        <begin position="255"/>
        <end position="277"/>
    </location>
</feature>
<feature type="zinc finger region" description="C2H2-type 7" evidence="1">
    <location>
        <begin position="283"/>
        <end position="305"/>
    </location>
</feature>
<feature type="zinc finger region" description="C2H2-type 8" evidence="1">
    <location>
        <begin position="311"/>
        <end position="333"/>
    </location>
</feature>
<feature type="zinc finger region" description="C2H2-type 9" evidence="1">
    <location>
        <begin position="339"/>
        <end position="361"/>
    </location>
</feature>
<feature type="zinc finger region" description="C2H2-type 10" evidence="1">
    <location>
        <begin position="367"/>
        <end position="389"/>
    </location>
</feature>
<feature type="zinc finger region" description="C2H2-type 11" evidence="1">
    <location>
        <begin position="395"/>
        <end position="417"/>
    </location>
</feature>
<feature type="zinc finger region" description="C2H2-type 12" evidence="1">
    <location>
        <begin position="423"/>
        <end position="445"/>
    </location>
</feature>
<feature type="zinc finger region" description="C2H2-type 13" evidence="1">
    <location>
        <begin position="451"/>
        <end position="473"/>
    </location>
</feature>
<feature type="zinc finger region" description="C2H2-type 14" evidence="1">
    <location>
        <begin position="479"/>
        <end position="500"/>
    </location>
</feature>
<feature type="zinc finger region" description="C2H2-type 15" evidence="1">
    <location>
        <begin position="506"/>
        <end position="528"/>
    </location>
</feature>
<organism>
    <name type="scientific">Homo sapiens</name>
    <name type="common">Human</name>
    <dbReference type="NCBI Taxonomy" id="9606"/>
    <lineage>
        <taxon>Eukaryota</taxon>
        <taxon>Metazoa</taxon>
        <taxon>Chordata</taxon>
        <taxon>Craniata</taxon>
        <taxon>Vertebrata</taxon>
        <taxon>Euteleostomi</taxon>
        <taxon>Mammalia</taxon>
        <taxon>Eutheria</taxon>
        <taxon>Euarchontoglires</taxon>
        <taxon>Primates</taxon>
        <taxon>Haplorrhini</taxon>
        <taxon>Catarrhini</taxon>
        <taxon>Hominidae</taxon>
        <taxon>Homo</taxon>
    </lineage>
</organism>
<keyword id="KW-0238">DNA-binding</keyword>
<keyword id="KW-0479">Metal-binding</keyword>
<keyword id="KW-0539">Nucleus</keyword>
<keyword id="KW-1267">Proteomics identification</keyword>
<keyword id="KW-1185">Reference proteome</keyword>
<keyword id="KW-0677">Repeat</keyword>
<keyword id="KW-0804">Transcription</keyword>
<keyword id="KW-0805">Transcription regulation</keyword>
<keyword id="KW-0862">Zinc</keyword>
<keyword id="KW-0863">Zinc-finger</keyword>
<dbReference type="EMBL" id="AL080125">
    <property type="protein sequence ID" value="CAB45723.2"/>
    <property type="molecule type" value="mRNA"/>
</dbReference>
<dbReference type="EMBL" id="CH471106">
    <property type="protein sequence ID" value="EAW84260.1"/>
    <property type="molecule type" value="Genomic_DNA"/>
</dbReference>
<dbReference type="EMBL" id="BC036714">
    <property type="protein sequence ID" value="AAH36714.3"/>
    <property type="molecule type" value="mRNA"/>
</dbReference>
<dbReference type="EMBL" id="X52344">
    <property type="protein sequence ID" value="CAA36570.1"/>
    <property type="molecule type" value="mRNA"/>
</dbReference>
<dbReference type="CCDS" id="CCDS45986.1"/>
<dbReference type="PIR" id="T12489">
    <property type="entry name" value="T12489"/>
</dbReference>
<dbReference type="RefSeq" id="NP_066966.2">
    <property type="nucleotide sequence ID" value="NM_021143.4"/>
</dbReference>
<dbReference type="SMR" id="P17024"/>
<dbReference type="BioGRID" id="113399">
    <property type="interactions" value="43"/>
</dbReference>
<dbReference type="FunCoup" id="P17024">
    <property type="interactions" value="15"/>
</dbReference>
<dbReference type="IntAct" id="P17024">
    <property type="interactions" value="66"/>
</dbReference>
<dbReference type="MINT" id="P17024"/>
<dbReference type="GlyGen" id="P17024">
    <property type="glycosylation" value="1 site, 1 O-linked glycan (1 site)"/>
</dbReference>
<dbReference type="iPTMnet" id="P17024"/>
<dbReference type="PhosphoSitePlus" id="P17024"/>
<dbReference type="BioMuta" id="ZNF20"/>
<dbReference type="DMDM" id="12643268"/>
<dbReference type="jPOST" id="P17024"/>
<dbReference type="MassIVE" id="P17024"/>
<dbReference type="PaxDb" id="9606-ENSP00000335437"/>
<dbReference type="PeptideAtlas" id="P17024"/>
<dbReference type="ProteomicsDB" id="53424"/>
<dbReference type="Antibodypedia" id="6988">
    <property type="antibodies" value="69 antibodies from 18 providers"/>
</dbReference>
<dbReference type="DNASU" id="7568"/>
<dbReference type="Ensembl" id="ENST00000334213.10">
    <property type="protein sequence ID" value="ENSP00000335437.5"/>
    <property type="gene ID" value="ENSG00000132010.16"/>
</dbReference>
<dbReference type="GeneID" id="7568"/>
<dbReference type="KEGG" id="hsa:7568"/>
<dbReference type="MANE-Select" id="ENST00000334213.10">
    <property type="protein sequence ID" value="ENSP00000335437.5"/>
    <property type="RefSeq nucleotide sequence ID" value="NM_021143.4"/>
    <property type="RefSeq protein sequence ID" value="NP_066966.2"/>
</dbReference>
<dbReference type="UCSC" id="uc002mtf.3">
    <property type="organism name" value="human"/>
</dbReference>
<dbReference type="AGR" id="HGNC:12992"/>
<dbReference type="CTD" id="7568"/>
<dbReference type="DisGeNET" id="7568"/>
<dbReference type="GeneCards" id="ZNF20"/>
<dbReference type="HGNC" id="HGNC:12992">
    <property type="gene designation" value="ZNF20"/>
</dbReference>
<dbReference type="HPA" id="ENSG00000132010">
    <property type="expression patterns" value="Low tissue specificity"/>
</dbReference>
<dbReference type="MIM" id="194557">
    <property type="type" value="gene"/>
</dbReference>
<dbReference type="neXtProt" id="NX_P17024"/>
<dbReference type="PharmGKB" id="PA37572"/>
<dbReference type="VEuPathDB" id="HostDB:ENSG00000132010"/>
<dbReference type="eggNOG" id="KOG1721">
    <property type="taxonomic scope" value="Eukaryota"/>
</dbReference>
<dbReference type="GeneTree" id="ENSGT00940000164761"/>
<dbReference type="HOGENOM" id="CLU_002678_44_3_1"/>
<dbReference type="InParanoid" id="P17024"/>
<dbReference type="OMA" id="QSHDEAC"/>
<dbReference type="OrthoDB" id="1095242at2759"/>
<dbReference type="PAN-GO" id="P17024">
    <property type="GO annotations" value="3 GO annotations based on evolutionary models"/>
</dbReference>
<dbReference type="PhylomeDB" id="P17024"/>
<dbReference type="TreeFam" id="TF338854"/>
<dbReference type="PathwayCommons" id="P17024"/>
<dbReference type="Reactome" id="R-HSA-212436">
    <property type="pathway name" value="Generic Transcription Pathway"/>
</dbReference>
<dbReference type="SignaLink" id="P17024"/>
<dbReference type="BioGRID-ORCS" id="7568">
    <property type="hits" value="18 hits in 1165 CRISPR screens"/>
</dbReference>
<dbReference type="GenomeRNAi" id="7568"/>
<dbReference type="Pharos" id="P17024">
    <property type="development level" value="Tdark"/>
</dbReference>
<dbReference type="PRO" id="PR:P17024"/>
<dbReference type="Proteomes" id="UP000005640">
    <property type="component" value="Chromosome 19"/>
</dbReference>
<dbReference type="RNAct" id="P17024">
    <property type="molecule type" value="protein"/>
</dbReference>
<dbReference type="Bgee" id="ENSG00000132010">
    <property type="expression patterns" value="Expressed in sural nerve and 102 other cell types or tissues"/>
</dbReference>
<dbReference type="ExpressionAtlas" id="P17024">
    <property type="expression patterns" value="baseline and differential"/>
</dbReference>
<dbReference type="GO" id="GO:0005634">
    <property type="term" value="C:nucleus"/>
    <property type="evidence" value="ECO:0000318"/>
    <property type="project" value="GO_Central"/>
</dbReference>
<dbReference type="GO" id="GO:0000981">
    <property type="term" value="F:DNA-binding transcription factor activity, RNA polymerase II-specific"/>
    <property type="evidence" value="ECO:0000318"/>
    <property type="project" value="GO_Central"/>
</dbReference>
<dbReference type="GO" id="GO:0000977">
    <property type="term" value="F:RNA polymerase II transcription regulatory region sequence-specific DNA binding"/>
    <property type="evidence" value="ECO:0000318"/>
    <property type="project" value="GO_Central"/>
</dbReference>
<dbReference type="GO" id="GO:0008270">
    <property type="term" value="F:zinc ion binding"/>
    <property type="evidence" value="ECO:0007669"/>
    <property type="project" value="UniProtKB-KW"/>
</dbReference>
<dbReference type="GO" id="GO:0006357">
    <property type="term" value="P:regulation of transcription by RNA polymerase II"/>
    <property type="evidence" value="ECO:0000318"/>
    <property type="project" value="GO_Central"/>
</dbReference>
<dbReference type="CDD" id="cd07765">
    <property type="entry name" value="KRAB_A-box"/>
    <property type="match status" value="1"/>
</dbReference>
<dbReference type="FunFam" id="3.30.160.60:FF:000650">
    <property type="entry name" value="Zinc finger protein 197"/>
    <property type="match status" value="1"/>
</dbReference>
<dbReference type="FunFam" id="3.30.160.60:FF:000193">
    <property type="entry name" value="Zinc finger protein 300"/>
    <property type="match status" value="1"/>
</dbReference>
<dbReference type="FunFam" id="3.30.160.60:FF:000184">
    <property type="entry name" value="Zinc finger protein 333"/>
    <property type="match status" value="5"/>
</dbReference>
<dbReference type="FunFam" id="3.30.160.60:FF:000165">
    <property type="entry name" value="Zinc finger protein 34"/>
    <property type="match status" value="1"/>
</dbReference>
<dbReference type="FunFam" id="3.30.160.60:FF:002254">
    <property type="entry name" value="Zinc finger protein 540"/>
    <property type="match status" value="3"/>
</dbReference>
<dbReference type="Gene3D" id="6.10.140.140">
    <property type="match status" value="1"/>
</dbReference>
<dbReference type="Gene3D" id="3.30.160.60">
    <property type="entry name" value="Classic Zinc Finger"/>
    <property type="match status" value="13"/>
</dbReference>
<dbReference type="InterPro" id="IPR001909">
    <property type="entry name" value="KRAB"/>
</dbReference>
<dbReference type="InterPro" id="IPR036051">
    <property type="entry name" value="KRAB_dom_sf"/>
</dbReference>
<dbReference type="InterPro" id="IPR050758">
    <property type="entry name" value="Znf_C2H2-type"/>
</dbReference>
<dbReference type="InterPro" id="IPR036236">
    <property type="entry name" value="Znf_C2H2_sf"/>
</dbReference>
<dbReference type="InterPro" id="IPR013087">
    <property type="entry name" value="Znf_C2H2_type"/>
</dbReference>
<dbReference type="PANTHER" id="PTHR23234:SF10">
    <property type="entry name" value="RIKEN CDNA 6720489N17 GENE-RELATED"/>
    <property type="match status" value="1"/>
</dbReference>
<dbReference type="PANTHER" id="PTHR23234">
    <property type="entry name" value="ZNF44 PROTEIN"/>
    <property type="match status" value="1"/>
</dbReference>
<dbReference type="Pfam" id="PF01352">
    <property type="entry name" value="KRAB"/>
    <property type="match status" value="1"/>
</dbReference>
<dbReference type="Pfam" id="PF00096">
    <property type="entry name" value="zf-C2H2"/>
    <property type="match status" value="7"/>
</dbReference>
<dbReference type="Pfam" id="PF13894">
    <property type="entry name" value="zf-C2H2_4"/>
    <property type="match status" value="1"/>
</dbReference>
<dbReference type="Pfam" id="PF13912">
    <property type="entry name" value="zf-C2H2_6"/>
    <property type="match status" value="1"/>
</dbReference>
<dbReference type="SMART" id="SM00349">
    <property type="entry name" value="KRAB"/>
    <property type="match status" value="1"/>
</dbReference>
<dbReference type="SMART" id="SM00355">
    <property type="entry name" value="ZnF_C2H2"/>
    <property type="match status" value="14"/>
</dbReference>
<dbReference type="SUPFAM" id="SSF57667">
    <property type="entry name" value="beta-beta-alpha zinc fingers"/>
    <property type="match status" value="8"/>
</dbReference>
<dbReference type="SUPFAM" id="SSF109640">
    <property type="entry name" value="KRAB domain (Kruppel-associated box)"/>
    <property type="match status" value="1"/>
</dbReference>
<dbReference type="PROSITE" id="PS50805">
    <property type="entry name" value="KRAB"/>
    <property type="match status" value="1"/>
</dbReference>
<dbReference type="PROSITE" id="PS00028">
    <property type="entry name" value="ZINC_FINGER_C2H2_1"/>
    <property type="match status" value="11"/>
</dbReference>
<dbReference type="PROSITE" id="PS50157">
    <property type="entry name" value="ZINC_FINGER_C2H2_2"/>
    <property type="match status" value="15"/>
</dbReference>
<evidence type="ECO:0000255" key="1">
    <source>
        <dbReference type="PROSITE-ProRule" id="PRU00042"/>
    </source>
</evidence>
<evidence type="ECO:0000255" key="2">
    <source>
        <dbReference type="PROSITE-ProRule" id="PRU00119"/>
    </source>
</evidence>
<evidence type="ECO:0000305" key="3"/>
<sequence length="532" mass="61567">MMFQDSVAFEDVAVSFTQEEWALLDPSQKNLYRDVMQETFKNLTSVGKTWKVQNIEDEYKNPRRNLSLMREKLCESKESHHCGESFNQIADDMLNRKTLPGITPCESSVCGEVGTGHSSLNTHIRADTGHKSSEYQEYGENPYRNKECKKAFSYLDSFQSHDKACTKEKPYDGKECTETFISHSCIQRHRVMHSGDGPYKCKFCGKAFYFLNLCLIHERIHTGVKPYKCKQCGKAFTRSTTLPVHERTHTGVNADECKECGNAFSFPSEIRRHKRSHTGEKPYECKQCGKVFISFSSIQYHKMTHTGEKPYECKQCGKAFRCGSHLQKHGRTHTGEKPYECRQCGKAFRCTSDLQRHEKTHTEDKPYGCKQCGKGFRCASQLQIHERTHSGEKPHECKECGKVFKYFSSLRIHERTHTGEKPHECKQCGKAFRYFSSLHIHERTHTGDKPYECKVCGKAFTCSSSIRYHERTHTGEKPYECKHCGKAFISNYIRYHERTHTGEKPYQCKQCGKAFIRASSCREHERTHTINR</sequence>
<name>ZNF20_HUMAN</name>
<proteinExistence type="evidence at protein level"/>
<accession>P17024</accession>
<accession>Q8N457</accession>
<accession>Q9UG41</accession>